<gene>
    <name evidence="1" type="primary">rplO</name>
    <name type="ordered locus">MAP_4186</name>
</gene>
<name>RL15_MYCPA</name>
<reference key="1">
    <citation type="journal article" date="2005" name="Proc. Natl. Acad. Sci. U.S.A.">
        <title>The complete genome sequence of Mycobacterium avium subspecies paratuberculosis.</title>
        <authorList>
            <person name="Li L."/>
            <person name="Bannantine J.P."/>
            <person name="Zhang Q."/>
            <person name="Amonsin A."/>
            <person name="May B.J."/>
            <person name="Alt D."/>
            <person name="Banerji N."/>
            <person name="Kanjilal S."/>
            <person name="Kapur V."/>
        </authorList>
    </citation>
    <scope>NUCLEOTIDE SEQUENCE [LARGE SCALE GENOMIC DNA]</scope>
    <source>
        <strain>ATCC BAA-968 / K-10</strain>
    </source>
</reference>
<keyword id="KW-1185">Reference proteome</keyword>
<keyword id="KW-0687">Ribonucleoprotein</keyword>
<keyword id="KW-0689">Ribosomal protein</keyword>
<keyword id="KW-0694">RNA-binding</keyword>
<keyword id="KW-0699">rRNA-binding</keyword>
<comment type="function">
    <text evidence="1">Binds to the 23S rRNA.</text>
</comment>
<comment type="subunit">
    <text evidence="1">Part of the 50S ribosomal subunit.</text>
</comment>
<comment type="similarity">
    <text evidence="1">Belongs to the universal ribosomal protein uL15 family.</text>
</comment>
<proteinExistence type="inferred from homology"/>
<organism>
    <name type="scientific">Mycolicibacterium paratuberculosis (strain ATCC BAA-968 / K-10)</name>
    <name type="common">Mycobacterium paratuberculosis</name>
    <dbReference type="NCBI Taxonomy" id="262316"/>
    <lineage>
        <taxon>Bacteria</taxon>
        <taxon>Bacillati</taxon>
        <taxon>Actinomycetota</taxon>
        <taxon>Actinomycetes</taxon>
        <taxon>Mycobacteriales</taxon>
        <taxon>Mycobacteriaceae</taxon>
        <taxon>Mycobacterium</taxon>
        <taxon>Mycobacterium avium complex (MAC)</taxon>
    </lineage>
</organism>
<evidence type="ECO:0000255" key="1">
    <source>
        <dbReference type="HAMAP-Rule" id="MF_01341"/>
    </source>
</evidence>
<evidence type="ECO:0000256" key="2">
    <source>
        <dbReference type="SAM" id="MobiDB-lite"/>
    </source>
</evidence>
<evidence type="ECO:0000305" key="3"/>
<feature type="chain" id="PRO_0000104754" description="Large ribosomal subunit protein uL15">
    <location>
        <begin position="1"/>
        <end position="146"/>
    </location>
</feature>
<feature type="region of interest" description="Disordered" evidence="2">
    <location>
        <begin position="1"/>
        <end position="52"/>
    </location>
</feature>
<feature type="compositionally biased region" description="Basic and acidic residues" evidence="2">
    <location>
        <begin position="1"/>
        <end position="10"/>
    </location>
</feature>
<dbReference type="EMBL" id="AE016958">
    <property type="protein sequence ID" value="AAS06736.1"/>
    <property type="molecule type" value="Genomic_DNA"/>
</dbReference>
<dbReference type="RefSeq" id="WP_003873493.1">
    <property type="nucleotide sequence ID" value="NZ_CP106873.1"/>
</dbReference>
<dbReference type="SMR" id="Q73S90"/>
<dbReference type="STRING" id="262316.MAP_4186"/>
<dbReference type="GeneID" id="75271960"/>
<dbReference type="KEGG" id="mpa:MAP_4186"/>
<dbReference type="eggNOG" id="COG0200">
    <property type="taxonomic scope" value="Bacteria"/>
</dbReference>
<dbReference type="HOGENOM" id="CLU_055188_4_1_11"/>
<dbReference type="Proteomes" id="UP000000580">
    <property type="component" value="Chromosome"/>
</dbReference>
<dbReference type="GO" id="GO:0022625">
    <property type="term" value="C:cytosolic large ribosomal subunit"/>
    <property type="evidence" value="ECO:0007669"/>
    <property type="project" value="TreeGrafter"/>
</dbReference>
<dbReference type="GO" id="GO:0019843">
    <property type="term" value="F:rRNA binding"/>
    <property type="evidence" value="ECO:0007669"/>
    <property type="project" value="UniProtKB-UniRule"/>
</dbReference>
<dbReference type="GO" id="GO:0003735">
    <property type="term" value="F:structural constituent of ribosome"/>
    <property type="evidence" value="ECO:0007669"/>
    <property type="project" value="InterPro"/>
</dbReference>
<dbReference type="GO" id="GO:0006412">
    <property type="term" value="P:translation"/>
    <property type="evidence" value="ECO:0007669"/>
    <property type="project" value="UniProtKB-UniRule"/>
</dbReference>
<dbReference type="FunFam" id="3.100.10.10:FF:000005">
    <property type="entry name" value="50S ribosomal protein L15"/>
    <property type="match status" value="1"/>
</dbReference>
<dbReference type="Gene3D" id="3.100.10.10">
    <property type="match status" value="1"/>
</dbReference>
<dbReference type="HAMAP" id="MF_01341">
    <property type="entry name" value="Ribosomal_uL15"/>
    <property type="match status" value="1"/>
</dbReference>
<dbReference type="InterPro" id="IPR030878">
    <property type="entry name" value="Ribosomal_uL15"/>
</dbReference>
<dbReference type="InterPro" id="IPR021131">
    <property type="entry name" value="Ribosomal_uL15/eL18"/>
</dbReference>
<dbReference type="InterPro" id="IPR036227">
    <property type="entry name" value="Ribosomal_uL15/eL18_sf"/>
</dbReference>
<dbReference type="InterPro" id="IPR005749">
    <property type="entry name" value="Ribosomal_uL15_bac-type"/>
</dbReference>
<dbReference type="InterPro" id="IPR001196">
    <property type="entry name" value="Ribosomal_uL15_CS"/>
</dbReference>
<dbReference type="NCBIfam" id="TIGR01071">
    <property type="entry name" value="rplO_bact"/>
    <property type="match status" value="1"/>
</dbReference>
<dbReference type="PANTHER" id="PTHR12934">
    <property type="entry name" value="50S RIBOSOMAL PROTEIN L15"/>
    <property type="match status" value="1"/>
</dbReference>
<dbReference type="PANTHER" id="PTHR12934:SF11">
    <property type="entry name" value="LARGE RIBOSOMAL SUBUNIT PROTEIN UL15M"/>
    <property type="match status" value="1"/>
</dbReference>
<dbReference type="Pfam" id="PF00828">
    <property type="entry name" value="Ribosomal_L27A"/>
    <property type="match status" value="1"/>
</dbReference>
<dbReference type="SUPFAM" id="SSF52080">
    <property type="entry name" value="Ribosomal proteins L15p and L18e"/>
    <property type="match status" value="1"/>
</dbReference>
<dbReference type="PROSITE" id="PS00475">
    <property type="entry name" value="RIBOSOMAL_L15"/>
    <property type="match status" value="1"/>
</dbReference>
<protein>
    <recommendedName>
        <fullName evidence="1">Large ribosomal subunit protein uL15</fullName>
    </recommendedName>
    <alternativeName>
        <fullName evidence="3">50S ribosomal protein L15</fullName>
    </alternativeName>
</protein>
<sequence>MTIKLHDLKPARGSKTPRTRVGRGEGSKGKTAGRGTKGTKARKNVPVTFEGGQMPIHMRLPKLKGFRNRFRTEYEIVNVGDINRLFPQGGSVGVDELVAKGAVRRNSLVKVLGDGKLTVKVEVSAHKFSGSAREKITAAGGSVTEL</sequence>
<accession>Q73S90</accession>